<reference key="1">
    <citation type="journal article" date="2011" name="J. Bacteriol.">
        <title>Complete genome sequence and updated annotation of Desulfovibrio alaskensis G20.</title>
        <authorList>
            <person name="Hauser L.J."/>
            <person name="Land M.L."/>
            <person name="Brown S.D."/>
            <person name="Larimer F."/>
            <person name="Keller K.L."/>
            <person name="Rapp-Giles B.J."/>
            <person name="Price M.N."/>
            <person name="Lin M."/>
            <person name="Bruce D.C."/>
            <person name="Detter J.C."/>
            <person name="Tapia R."/>
            <person name="Han C.S."/>
            <person name="Goodwin L.A."/>
            <person name="Cheng J.F."/>
            <person name="Pitluck S."/>
            <person name="Copeland A."/>
            <person name="Lucas S."/>
            <person name="Nolan M."/>
            <person name="Lapidus A.L."/>
            <person name="Palumbo A.V."/>
            <person name="Wall J.D."/>
        </authorList>
    </citation>
    <scope>NUCLEOTIDE SEQUENCE [LARGE SCALE GENOMIC DNA]</scope>
    <source>
        <strain>ATCC BAA-1058 / DSM 17464 / G20</strain>
    </source>
</reference>
<keyword id="KW-0975">Bacterial flagellum</keyword>
<keyword id="KW-0574">Periplasm</keyword>
<keyword id="KW-1185">Reference proteome</keyword>
<keyword id="KW-0732">Signal</keyword>
<organism>
    <name type="scientific">Oleidesulfovibrio alaskensis (strain ATCC BAA-1058 / DSM 17464 / G20)</name>
    <name type="common">Desulfovibrio alaskensis</name>
    <dbReference type="NCBI Taxonomy" id="207559"/>
    <lineage>
        <taxon>Bacteria</taxon>
        <taxon>Pseudomonadati</taxon>
        <taxon>Thermodesulfobacteriota</taxon>
        <taxon>Desulfovibrionia</taxon>
        <taxon>Desulfovibrionales</taxon>
        <taxon>Desulfovibrionaceae</taxon>
        <taxon>Oleidesulfovibrio</taxon>
    </lineage>
</organism>
<feature type="signal peptide" evidence="1">
    <location>
        <begin position="1"/>
        <end position="28"/>
    </location>
</feature>
<feature type="chain" id="PRO_0000236300" description="Flagellar P-ring protein">
    <location>
        <begin position="29"/>
        <end position="370"/>
    </location>
</feature>
<comment type="function">
    <text evidence="1">Assembles around the rod to form the L-ring and probably protects the motor/basal body from shearing forces during rotation.</text>
</comment>
<comment type="subunit">
    <text evidence="1">The basal body constitutes a major portion of the flagellar organelle and consists of four rings (L,P,S, and M) mounted on a central rod.</text>
</comment>
<comment type="subcellular location">
    <subcellularLocation>
        <location evidence="1">Periplasm</location>
    </subcellularLocation>
    <subcellularLocation>
        <location evidence="1">Bacterial flagellum basal body</location>
    </subcellularLocation>
</comment>
<comment type="similarity">
    <text evidence="1">Belongs to the FlgI family.</text>
</comment>
<evidence type="ECO:0000255" key="1">
    <source>
        <dbReference type="HAMAP-Rule" id="MF_00416"/>
    </source>
</evidence>
<proteinExistence type="inferred from homology"/>
<name>FLGI_OLEA2</name>
<gene>
    <name evidence="1" type="primary">flgI</name>
    <name type="ordered locus">Dde_3155</name>
</gene>
<protein>
    <recommendedName>
        <fullName evidence="1">Flagellar P-ring protein</fullName>
    </recommendedName>
    <alternativeName>
        <fullName evidence="1">Basal body P-ring protein</fullName>
    </alternativeName>
</protein>
<accession>Q30WJ7</accession>
<sequence length="370" mass="39066">MTFFTRCFRRGALLFLLAVLLLPSPAQAVRIKDIASFGGVRDNDLMGYGLVVGLGGTGDKKSSTFTISSMVNMLDKMGIAVDRTKLTPKNVAAVMVTTRMPVSARPGSRLDITVSSLGDATSLLGGVLLMTPMKGVDGKVYALAQGPLALGGFSAEGDAARAQKNITTVGRIPGGAVVERAVPFEFNTQNKLTLHMNVQDFSTTMQVVDRLNDNMGGQFASARDIATVDIMVPPAYRGNLVPLMASLENLPVTPDSPARVVVDEKTGTVVVGNSVRISKVAVSHGNLQIVVQENPQVSQPGAFSPGQTVVTPQTDIAAQEENRRLVMMEGATLQELVDGLNSIGATPRDLISILRTLKAAGALHAELEVI</sequence>
<dbReference type="EMBL" id="CP000112">
    <property type="protein sequence ID" value="ABB39949.1"/>
    <property type="molecule type" value="Genomic_DNA"/>
</dbReference>
<dbReference type="RefSeq" id="WP_011368903.1">
    <property type="nucleotide sequence ID" value="NC_007519.1"/>
</dbReference>
<dbReference type="SMR" id="Q30WJ7"/>
<dbReference type="STRING" id="207559.Dde_3155"/>
<dbReference type="KEGG" id="dde:Dde_3155"/>
<dbReference type="eggNOG" id="COG1706">
    <property type="taxonomic scope" value="Bacteria"/>
</dbReference>
<dbReference type="HOGENOM" id="CLU_045235_1_0_7"/>
<dbReference type="Proteomes" id="UP000002710">
    <property type="component" value="Chromosome"/>
</dbReference>
<dbReference type="GO" id="GO:0009428">
    <property type="term" value="C:bacterial-type flagellum basal body, distal rod, P ring"/>
    <property type="evidence" value="ECO:0007669"/>
    <property type="project" value="InterPro"/>
</dbReference>
<dbReference type="GO" id="GO:0030288">
    <property type="term" value="C:outer membrane-bounded periplasmic space"/>
    <property type="evidence" value="ECO:0007669"/>
    <property type="project" value="InterPro"/>
</dbReference>
<dbReference type="GO" id="GO:0005198">
    <property type="term" value="F:structural molecule activity"/>
    <property type="evidence" value="ECO:0007669"/>
    <property type="project" value="InterPro"/>
</dbReference>
<dbReference type="GO" id="GO:0071973">
    <property type="term" value="P:bacterial-type flagellum-dependent cell motility"/>
    <property type="evidence" value="ECO:0007669"/>
    <property type="project" value="InterPro"/>
</dbReference>
<dbReference type="HAMAP" id="MF_00416">
    <property type="entry name" value="FlgI"/>
    <property type="match status" value="1"/>
</dbReference>
<dbReference type="InterPro" id="IPR001782">
    <property type="entry name" value="Flag_FlgI"/>
</dbReference>
<dbReference type="NCBIfam" id="NF003676">
    <property type="entry name" value="PRK05303.1"/>
    <property type="match status" value="1"/>
</dbReference>
<dbReference type="PANTHER" id="PTHR30381">
    <property type="entry name" value="FLAGELLAR P-RING PERIPLASMIC PROTEIN FLGI"/>
    <property type="match status" value="1"/>
</dbReference>
<dbReference type="PANTHER" id="PTHR30381:SF0">
    <property type="entry name" value="FLAGELLAR P-RING PROTEIN"/>
    <property type="match status" value="1"/>
</dbReference>
<dbReference type="Pfam" id="PF02119">
    <property type="entry name" value="FlgI"/>
    <property type="match status" value="1"/>
</dbReference>
<dbReference type="PRINTS" id="PR01010">
    <property type="entry name" value="FLGPRINGFLGI"/>
</dbReference>